<protein>
    <recommendedName>
        <fullName evidence="1">ATP synthase subunit b</fullName>
    </recommendedName>
    <alternativeName>
        <fullName evidence="1">ATP synthase F(0) sector subunit b</fullName>
    </alternativeName>
    <alternativeName>
        <fullName evidence="1">ATPase subunit I</fullName>
    </alternativeName>
    <alternativeName>
        <fullName evidence="1">F-type ATPase subunit b</fullName>
        <shortName evidence="1">F-ATPase subunit b</shortName>
    </alternativeName>
</protein>
<accession>Q87KA4</accession>
<gene>
    <name evidence="1" type="primary">atpF</name>
    <name type="ordered locus">VP3073</name>
</gene>
<name>ATPF_VIBPA</name>
<sequence>MNINATLLGQAISFALFVWFCMKYVWPPLMQAIEERQKKIADGLQAAERAAKDLDLAQANASDQLKEAKRTATEIIEQANKRKSQIIDEAREEAQAERQKILAQAEAELEAERNRARDELRKQVATLAVAGAEKILERTIDKDAQKDILDNITAKL</sequence>
<keyword id="KW-0066">ATP synthesis</keyword>
<keyword id="KW-0997">Cell inner membrane</keyword>
<keyword id="KW-1003">Cell membrane</keyword>
<keyword id="KW-0138">CF(0)</keyword>
<keyword id="KW-0375">Hydrogen ion transport</keyword>
<keyword id="KW-0406">Ion transport</keyword>
<keyword id="KW-0472">Membrane</keyword>
<keyword id="KW-0812">Transmembrane</keyword>
<keyword id="KW-1133">Transmembrane helix</keyword>
<keyword id="KW-0813">Transport</keyword>
<feature type="chain" id="PRO_0000082397" description="ATP synthase subunit b">
    <location>
        <begin position="1"/>
        <end position="156"/>
    </location>
</feature>
<feature type="transmembrane region" description="Helical" evidence="1">
    <location>
        <begin position="7"/>
        <end position="29"/>
    </location>
</feature>
<comment type="function">
    <text evidence="1">F(1)F(0) ATP synthase produces ATP from ADP in the presence of a proton or sodium gradient. F-type ATPases consist of two structural domains, F(1) containing the extramembraneous catalytic core and F(0) containing the membrane proton channel, linked together by a central stalk and a peripheral stalk. During catalysis, ATP synthesis in the catalytic domain of F(1) is coupled via a rotary mechanism of the central stalk subunits to proton translocation.</text>
</comment>
<comment type="function">
    <text evidence="1">Component of the F(0) channel, it forms part of the peripheral stalk, linking F(1) to F(0).</text>
</comment>
<comment type="subunit">
    <text evidence="1">F-type ATPases have 2 components, F(1) - the catalytic core - and F(0) - the membrane proton channel. F(1) has five subunits: alpha(3), beta(3), gamma(1), delta(1), epsilon(1). F(0) has three main subunits: a(1), b(2) and c(10-14). The alpha and beta chains form an alternating ring which encloses part of the gamma chain. F(1) is attached to F(0) by a central stalk formed by the gamma and epsilon chains, while a peripheral stalk is formed by the delta and b chains.</text>
</comment>
<comment type="subcellular location">
    <subcellularLocation>
        <location evidence="1">Cell inner membrane</location>
        <topology evidence="1">Single-pass membrane protein</topology>
    </subcellularLocation>
</comment>
<comment type="similarity">
    <text evidence="1">Belongs to the ATPase B chain family.</text>
</comment>
<proteinExistence type="inferred from homology"/>
<evidence type="ECO:0000255" key="1">
    <source>
        <dbReference type="HAMAP-Rule" id="MF_01398"/>
    </source>
</evidence>
<dbReference type="EMBL" id="BA000031">
    <property type="protein sequence ID" value="BAC61336.1"/>
    <property type="molecule type" value="Genomic_DNA"/>
</dbReference>
<dbReference type="RefSeq" id="NP_799452.1">
    <property type="nucleotide sequence ID" value="NC_004603.1"/>
</dbReference>
<dbReference type="RefSeq" id="WP_005458451.1">
    <property type="nucleotide sequence ID" value="NC_004603.1"/>
</dbReference>
<dbReference type="SMR" id="Q87KA4"/>
<dbReference type="GeneID" id="1190672"/>
<dbReference type="KEGG" id="vpa:VP3073"/>
<dbReference type="PATRIC" id="fig|223926.6.peg.2959"/>
<dbReference type="eggNOG" id="COG0711">
    <property type="taxonomic scope" value="Bacteria"/>
</dbReference>
<dbReference type="HOGENOM" id="CLU_079215_4_5_6"/>
<dbReference type="Proteomes" id="UP000002493">
    <property type="component" value="Chromosome 1"/>
</dbReference>
<dbReference type="GO" id="GO:0005886">
    <property type="term" value="C:plasma membrane"/>
    <property type="evidence" value="ECO:0007669"/>
    <property type="project" value="UniProtKB-SubCell"/>
</dbReference>
<dbReference type="GO" id="GO:0045259">
    <property type="term" value="C:proton-transporting ATP synthase complex"/>
    <property type="evidence" value="ECO:0007669"/>
    <property type="project" value="UniProtKB-KW"/>
</dbReference>
<dbReference type="GO" id="GO:0046933">
    <property type="term" value="F:proton-transporting ATP synthase activity, rotational mechanism"/>
    <property type="evidence" value="ECO:0007669"/>
    <property type="project" value="UniProtKB-UniRule"/>
</dbReference>
<dbReference type="GO" id="GO:0046961">
    <property type="term" value="F:proton-transporting ATPase activity, rotational mechanism"/>
    <property type="evidence" value="ECO:0007669"/>
    <property type="project" value="TreeGrafter"/>
</dbReference>
<dbReference type="CDD" id="cd06503">
    <property type="entry name" value="ATP-synt_Fo_b"/>
    <property type="match status" value="1"/>
</dbReference>
<dbReference type="FunFam" id="1.20.5.620:FF:000001">
    <property type="entry name" value="ATP synthase subunit b"/>
    <property type="match status" value="1"/>
</dbReference>
<dbReference type="Gene3D" id="6.10.250.1580">
    <property type="match status" value="1"/>
</dbReference>
<dbReference type="HAMAP" id="MF_01398">
    <property type="entry name" value="ATP_synth_b_bprime"/>
    <property type="match status" value="1"/>
</dbReference>
<dbReference type="InterPro" id="IPR028987">
    <property type="entry name" value="ATP_synth_B-like_membr_sf"/>
</dbReference>
<dbReference type="InterPro" id="IPR002146">
    <property type="entry name" value="ATP_synth_b/b'su_bac/chlpt"/>
</dbReference>
<dbReference type="InterPro" id="IPR005864">
    <property type="entry name" value="ATP_synth_F0_bsu_bac"/>
</dbReference>
<dbReference type="InterPro" id="IPR050059">
    <property type="entry name" value="ATP_synthase_B_chain"/>
</dbReference>
<dbReference type="NCBIfam" id="TIGR01144">
    <property type="entry name" value="ATP_synt_b"/>
    <property type="match status" value="1"/>
</dbReference>
<dbReference type="NCBIfam" id="NF004411">
    <property type="entry name" value="PRK05759.1-2"/>
    <property type="match status" value="1"/>
</dbReference>
<dbReference type="NCBIfam" id="NF004413">
    <property type="entry name" value="PRK05759.1-4"/>
    <property type="match status" value="1"/>
</dbReference>
<dbReference type="PANTHER" id="PTHR33445:SF1">
    <property type="entry name" value="ATP SYNTHASE SUBUNIT B"/>
    <property type="match status" value="1"/>
</dbReference>
<dbReference type="PANTHER" id="PTHR33445">
    <property type="entry name" value="ATP SYNTHASE SUBUNIT B', CHLOROPLASTIC"/>
    <property type="match status" value="1"/>
</dbReference>
<dbReference type="Pfam" id="PF00430">
    <property type="entry name" value="ATP-synt_B"/>
    <property type="match status" value="1"/>
</dbReference>
<dbReference type="SUPFAM" id="SSF81573">
    <property type="entry name" value="F1F0 ATP synthase subunit B, membrane domain"/>
    <property type="match status" value="1"/>
</dbReference>
<reference key="1">
    <citation type="journal article" date="2003" name="Lancet">
        <title>Genome sequence of Vibrio parahaemolyticus: a pathogenic mechanism distinct from that of V. cholerae.</title>
        <authorList>
            <person name="Makino K."/>
            <person name="Oshima K."/>
            <person name="Kurokawa K."/>
            <person name="Yokoyama K."/>
            <person name="Uda T."/>
            <person name="Tagomori K."/>
            <person name="Iijima Y."/>
            <person name="Najima M."/>
            <person name="Nakano M."/>
            <person name="Yamashita A."/>
            <person name="Kubota Y."/>
            <person name="Kimura S."/>
            <person name="Yasunaga T."/>
            <person name="Honda T."/>
            <person name="Shinagawa H."/>
            <person name="Hattori M."/>
            <person name="Iida T."/>
        </authorList>
    </citation>
    <scope>NUCLEOTIDE SEQUENCE [LARGE SCALE GENOMIC DNA]</scope>
    <source>
        <strain>RIMD 2210633</strain>
    </source>
</reference>
<organism>
    <name type="scientific">Vibrio parahaemolyticus serotype O3:K6 (strain RIMD 2210633)</name>
    <dbReference type="NCBI Taxonomy" id="223926"/>
    <lineage>
        <taxon>Bacteria</taxon>
        <taxon>Pseudomonadati</taxon>
        <taxon>Pseudomonadota</taxon>
        <taxon>Gammaproteobacteria</taxon>
        <taxon>Vibrionales</taxon>
        <taxon>Vibrionaceae</taxon>
        <taxon>Vibrio</taxon>
    </lineage>
</organism>